<name>COAX_THEVB</name>
<reference key="1">
    <citation type="journal article" date="2002" name="DNA Res.">
        <title>Complete genome structure of the thermophilic cyanobacterium Thermosynechococcus elongatus BP-1.</title>
        <authorList>
            <person name="Nakamura Y."/>
            <person name="Kaneko T."/>
            <person name="Sato S."/>
            <person name="Ikeuchi M."/>
            <person name="Katoh H."/>
            <person name="Sasamoto S."/>
            <person name="Watanabe A."/>
            <person name="Iriguchi M."/>
            <person name="Kawashima K."/>
            <person name="Kimura T."/>
            <person name="Kishida Y."/>
            <person name="Kiyokawa C."/>
            <person name="Kohara M."/>
            <person name="Matsumoto M."/>
            <person name="Matsuno A."/>
            <person name="Nakazaki N."/>
            <person name="Shimpo S."/>
            <person name="Sugimoto M."/>
            <person name="Takeuchi C."/>
            <person name="Yamada M."/>
            <person name="Tabata S."/>
        </authorList>
    </citation>
    <scope>NUCLEOTIDE SEQUENCE [LARGE SCALE GENOMIC DNA]</scope>
    <source>
        <strain>NIES-2133 / IAM M-273 / BP-1</strain>
    </source>
</reference>
<protein>
    <recommendedName>
        <fullName evidence="1">Type III pantothenate kinase</fullName>
        <ecNumber evidence="1">2.7.1.33</ecNumber>
    </recommendedName>
    <alternativeName>
        <fullName evidence="1">PanK-III</fullName>
    </alternativeName>
    <alternativeName>
        <fullName evidence="1">Pantothenic acid kinase</fullName>
    </alternativeName>
</protein>
<organism>
    <name type="scientific">Thermosynechococcus vestitus (strain NIES-2133 / IAM M-273 / BP-1)</name>
    <dbReference type="NCBI Taxonomy" id="197221"/>
    <lineage>
        <taxon>Bacteria</taxon>
        <taxon>Bacillati</taxon>
        <taxon>Cyanobacteriota</taxon>
        <taxon>Cyanophyceae</taxon>
        <taxon>Acaryochloridales</taxon>
        <taxon>Thermosynechococcaceae</taxon>
        <taxon>Thermosynechococcus</taxon>
    </lineage>
</organism>
<keyword id="KW-0067">ATP-binding</keyword>
<keyword id="KW-0173">Coenzyme A biosynthesis</keyword>
<keyword id="KW-0963">Cytoplasm</keyword>
<keyword id="KW-0418">Kinase</keyword>
<keyword id="KW-0479">Metal-binding</keyword>
<keyword id="KW-0547">Nucleotide-binding</keyword>
<keyword id="KW-0630">Potassium</keyword>
<keyword id="KW-1185">Reference proteome</keyword>
<keyword id="KW-0808">Transferase</keyword>
<gene>
    <name evidence="1" type="primary">coaX</name>
    <name type="ordered locus">tll1149</name>
</gene>
<sequence length="254" mass="28166">MVPPETNQWFALMIGNTRQHWALFRGEHLSRTWHLTPEELACNPAQDYPNLPCWGASVGSVPLHQVYPRAIALTLEDIPLPQMYPTLGLDRALALWGALQVYGAPVCVVDAGTALTLTLANDRREFAGGVILPGVGLMARALADYTAALPYVPLPTEPPRRWGTTTTTAIASGLYYGTAAILQAYLDAFLQEFPQGTVIVTGGDRPFVSELLRTFLDSDRWCEDDHLVFWGIRALRNPAAKIEMHPMERIDEFH</sequence>
<dbReference type="EC" id="2.7.1.33" evidence="1"/>
<dbReference type="EMBL" id="BA000039">
    <property type="protein sequence ID" value="BAC08701.1"/>
    <property type="molecule type" value="Genomic_DNA"/>
</dbReference>
<dbReference type="RefSeq" id="NP_681939.1">
    <property type="nucleotide sequence ID" value="NC_004113.1"/>
</dbReference>
<dbReference type="RefSeq" id="WP_011056991.1">
    <property type="nucleotide sequence ID" value="NC_004113.1"/>
</dbReference>
<dbReference type="SMR" id="Q8DJS3"/>
<dbReference type="STRING" id="197221.gene:10747744"/>
<dbReference type="EnsemblBacteria" id="BAC08701">
    <property type="protein sequence ID" value="BAC08701"/>
    <property type="gene ID" value="BAC08701"/>
</dbReference>
<dbReference type="KEGG" id="tel:tll1149"/>
<dbReference type="eggNOG" id="COG1521">
    <property type="taxonomic scope" value="Bacteria"/>
</dbReference>
<dbReference type="UniPathway" id="UPA00241">
    <property type="reaction ID" value="UER00352"/>
</dbReference>
<dbReference type="Proteomes" id="UP000000440">
    <property type="component" value="Chromosome"/>
</dbReference>
<dbReference type="GO" id="GO:0005737">
    <property type="term" value="C:cytoplasm"/>
    <property type="evidence" value="ECO:0007669"/>
    <property type="project" value="UniProtKB-SubCell"/>
</dbReference>
<dbReference type="GO" id="GO:0005524">
    <property type="term" value="F:ATP binding"/>
    <property type="evidence" value="ECO:0007669"/>
    <property type="project" value="UniProtKB-UniRule"/>
</dbReference>
<dbReference type="GO" id="GO:0046872">
    <property type="term" value="F:metal ion binding"/>
    <property type="evidence" value="ECO:0007669"/>
    <property type="project" value="UniProtKB-KW"/>
</dbReference>
<dbReference type="GO" id="GO:0004594">
    <property type="term" value="F:pantothenate kinase activity"/>
    <property type="evidence" value="ECO:0007669"/>
    <property type="project" value="UniProtKB-UniRule"/>
</dbReference>
<dbReference type="GO" id="GO:0015937">
    <property type="term" value="P:coenzyme A biosynthetic process"/>
    <property type="evidence" value="ECO:0007669"/>
    <property type="project" value="UniProtKB-UniRule"/>
</dbReference>
<dbReference type="CDD" id="cd24015">
    <property type="entry name" value="ASKHA_NBD_PanK-III"/>
    <property type="match status" value="1"/>
</dbReference>
<dbReference type="Gene3D" id="3.30.420.40">
    <property type="match status" value="1"/>
</dbReference>
<dbReference type="HAMAP" id="MF_01274">
    <property type="entry name" value="Pantothen_kinase_3"/>
    <property type="match status" value="1"/>
</dbReference>
<dbReference type="InterPro" id="IPR043129">
    <property type="entry name" value="ATPase_NBD"/>
</dbReference>
<dbReference type="InterPro" id="IPR004619">
    <property type="entry name" value="Type_III_PanK"/>
</dbReference>
<dbReference type="NCBIfam" id="TIGR00671">
    <property type="entry name" value="baf"/>
    <property type="match status" value="1"/>
</dbReference>
<dbReference type="NCBIfam" id="NF009871">
    <property type="entry name" value="PRK13331.1"/>
    <property type="match status" value="1"/>
</dbReference>
<dbReference type="PANTHER" id="PTHR34265">
    <property type="entry name" value="TYPE III PANTOTHENATE KINASE"/>
    <property type="match status" value="1"/>
</dbReference>
<dbReference type="PANTHER" id="PTHR34265:SF1">
    <property type="entry name" value="TYPE III PANTOTHENATE KINASE"/>
    <property type="match status" value="1"/>
</dbReference>
<dbReference type="Pfam" id="PF03309">
    <property type="entry name" value="Pan_kinase"/>
    <property type="match status" value="1"/>
</dbReference>
<dbReference type="SUPFAM" id="SSF53067">
    <property type="entry name" value="Actin-like ATPase domain"/>
    <property type="match status" value="2"/>
</dbReference>
<accession>Q8DJS3</accession>
<feature type="chain" id="PRO_0000270900" description="Type III pantothenate kinase">
    <location>
        <begin position="1"/>
        <end position="254"/>
    </location>
</feature>
<feature type="active site" description="Proton acceptor" evidence="1">
    <location>
        <position position="90"/>
    </location>
</feature>
<feature type="binding site" evidence="1">
    <location>
        <begin position="13"/>
        <end position="20"/>
    </location>
    <ligand>
        <name>ATP</name>
        <dbReference type="ChEBI" id="CHEBI:30616"/>
    </ligand>
</feature>
<feature type="binding site" evidence="1">
    <location>
        <position position="84"/>
    </location>
    <ligand>
        <name>substrate</name>
    </ligand>
</feature>
<feature type="binding site" evidence="1">
    <location>
        <begin position="88"/>
        <end position="91"/>
    </location>
    <ligand>
        <name>substrate</name>
    </ligand>
</feature>
<feature type="binding site" evidence="1">
    <location>
        <position position="110"/>
    </location>
    <ligand>
        <name>K(+)</name>
        <dbReference type="ChEBI" id="CHEBI:29103"/>
    </ligand>
</feature>
<feature type="binding site" evidence="1">
    <location>
        <position position="113"/>
    </location>
    <ligand>
        <name>ATP</name>
        <dbReference type="ChEBI" id="CHEBI:30616"/>
    </ligand>
</feature>
<feature type="binding site" evidence="1">
    <location>
        <position position="166"/>
    </location>
    <ligand>
        <name>substrate</name>
    </ligand>
</feature>
<proteinExistence type="inferred from homology"/>
<comment type="function">
    <text evidence="1">Catalyzes the phosphorylation of pantothenate (Pan), the first step in CoA biosynthesis.</text>
</comment>
<comment type="catalytic activity">
    <reaction evidence="1">
        <text>(R)-pantothenate + ATP = (R)-4'-phosphopantothenate + ADP + H(+)</text>
        <dbReference type="Rhea" id="RHEA:16373"/>
        <dbReference type="ChEBI" id="CHEBI:10986"/>
        <dbReference type="ChEBI" id="CHEBI:15378"/>
        <dbReference type="ChEBI" id="CHEBI:29032"/>
        <dbReference type="ChEBI" id="CHEBI:30616"/>
        <dbReference type="ChEBI" id="CHEBI:456216"/>
        <dbReference type="EC" id="2.7.1.33"/>
    </reaction>
</comment>
<comment type="cofactor">
    <cofactor evidence="1">
        <name>NH4(+)</name>
        <dbReference type="ChEBI" id="CHEBI:28938"/>
    </cofactor>
    <cofactor evidence="1">
        <name>K(+)</name>
        <dbReference type="ChEBI" id="CHEBI:29103"/>
    </cofactor>
    <text evidence="1">A monovalent cation. Ammonium or potassium.</text>
</comment>
<comment type="pathway">
    <text evidence="1">Cofactor biosynthesis; coenzyme A biosynthesis; CoA from (R)-pantothenate: step 1/5.</text>
</comment>
<comment type="subunit">
    <text evidence="1">Homodimer.</text>
</comment>
<comment type="subcellular location">
    <subcellularLocation>
        <location evidence="1">Cytoplasm</location>
    </subcellularLocation>
</comment>
<comment type="similarity">
    <text evidence="1">Belongs to the type III pantothenate kinase family.</text>
</comment>
<evidence type="ECO:0000255" key="1">
    <source>
        <dbReference type="HAMAP-Rule" id="MF_01274"/>
    </source>
</evidence>